<sequence>MKREDIPAIIPADIEEKKKAAQSWFEELRDRICASYEQLEDELQGPLSDREPGRFVRTPWQKDDGNGGGVMSIMHGRVFEKVGVHVSTVHGEFSPEFRKQIPGAEEDPRYWASGISLIAHPQNPNVPAVHMNTRMIVTTRQWFAGGADLTPVLDRRRTQEDPDTLAFHKAFRFICEKHKDIVDYQRLKEWCDEYFFLPHRDEPRGIGGIFYDWLHSPEEKGGWDSDFAFTRDVGRGFSVVYPHLVRQNFNKDWTEADRDEQLIRRGRYVEFNLLYDRGTIFGLKTGGNMNAILSSMPPVVKWP</sequence>
<dbReference type="EC" id="1.3.3.3" evidence="1"/>
<dbReference type="EMBL" id="CP000887">
    <property type="protein sequence ID" value="ACD72957.1"/>
    <property type="molecule type" value="Genomic_DNA"/>
</dbReference>
<dbReference type="RefSeq" id="WP_002964654.1">
    <property type="nucleotide sequence ID" value="NC_010742.1"/>
</dbReference>
<dbReference type="SMR" id="B2S710"/>
<dbReference type="GeneID" id="97533266"/>
<dbReference type="KEGG" id="bmc:BAbS19_I14640"/>
<dbReference type="HOGENOM" id="CLU_026169_0_1_5"/>
<dbReference type="UniPathway" id="UPA00251">
    <property type="reaction ID" value="UER00322"/>
</dbReference>
<dbReference type="Proteomes" id="UP000002565">
    <property type="component" value="Chromosome 1"/>
</dbReference>
<dbReference type="GO" id="GO:0005737">
    <property type="term" value="C:cytoplasm"/>
    <property type="evidence" value="ECO:0007669"/>
    <property type="project" value="UniProtKB-SubCell"/>
</dbReference>
<dbReference type="GO" id="GO:0004109">
    <property type="term" value="F:coproporphyrinogen oxidase activity"/>
    <property type="evidence" value="ECO:0007669"/>
    <property type="project" value="UniProtKB-UniRule"/>
</dbReference>
<dbReference type="GO" id="GO:0046872">
    <property type="term" value="F:metal ion binding"/>
    <property type="evidence" value="ECO:0007669"/>
    <property type="project" value="UniProtKB-KW"/>
</dbReference>
<dbReference type="GO" id="GO:0042803">
    <property type="term" value="F:protein homodimerization activity"/>
    <property type="evidence" value="ECO:0000250"/>
    <property type="project" value="UniProtKB"/>
</dbReference>
<dbReference type="GO" id="GO:0006782">
    <property type="term" value="P:protoporphyrinogen IX biosynthetic process"/>
    <property type="evidence" value="ECO:0007669"/>
    <property type="project" value="UniProtKB-UniRule"/>
</dbReference>
<dbReference type="FunFam" id="3.40.1500.10:FF:000005">
    <property type="entry name" value="Oxygen-dependent coproporphyrinogen-III oxidase"/>
    <property type="match status" value="1"/>
</dbReference>
<dbReference type="Gene3D" id="3.40.1500.10">
    <property type="entry name" value="Coproporphyrinogen III oxidase, aerobic"/>
    <property type="match status" value="1"/>
</dbReference>
<dbReference type="HAMAP" id="MF_00333">
    <property type="entry name" value="Coprogen_oxidas"/>
    <property type="match status" value="1"/>
</dbReference>
<dbReference type="InterPro" id="IPR001260">
    <property type="entry name" value="Coprogen_oxidase_aer"/>
</dbReference>
<dbReference type="InterPro" id="IPR036406">
    <property type="entry name" value="Coprogen_oxidase_aer_sf"/>
</dbReference>
<dbReference type="InterPro" id="IPR018375">
    <property type="entry name" value="Coprogen_oxidase_CS"/>
</dbReference>
<dbReference type="NCBIfam" id="NF003727">
    <property type="entry name" value="PRK05330.1"/>
    <property type="match status" value="1"/>
</dbReference>
<dbReference type="PANTHER" id="PTHR10755">
    <property type="entry name" value="COPROPORPHYRINOGEN III OXIDASE, MITOCHONDRIAL"/>
    <property type="match status" value="1"/>
</dbReference>
<dbReference type="PANTHER" id="PTHR10755:SF0">
    <property type="entry name" value="OXYGEN-DEPENDENT COPROPORPHYRINOGEN-III OXIDASE, MITOCHONDRIAL"/>
    <property type="match status" value="1"/>
</dbReference>
<dbReference type="Pfam" id="PF01218">
    <property type="entry name" value="Coprogen_oxidas"/>
    <property type="match status" value="1"/>
</dbReference>
<dbReference type="PIRSF" id="PIRSF000166">
    <property type="entry name" value="Coproporphyri_ox"/>
    <property type="match status" value="1"/>
</dbReference>
<dbReference type="PRINTS" id="PR00073">
    <property type="entry name" value="COPRGNOXDASE"/>
</dbReference>
<dbReference type="SUPFAM" id="SSF102886">
    <property type="entry name" value="Coproporphyrinogen III oxidase"/>
    <property type="match status" value="1"/>
</dbReference>
<dbReference type="PROSITE" id="PS01021">
    <property type="entry name" value="COPROGEN_OXIDASE"/>
    <property type="match status" value="1"/>
</dbReference>
<organism>
    <name type="scientific">Brucella abortus (strain S19)</name>
    <dbReference type="NCBI Taxonomy" id="430066"/>
    <lineage>
        <taxon>Bacteria</taxon>
        <taxon>Pseudomonadati</taxon>
        <taxon>Pseudomonadota</taxon>
        <taxon>Alphaproteobacteria</taxon>
        <taxon>Hyphomicrobiales</taxon>
        <taxon>Brucellaceae</taxon>
        <taxon>Brucella/Ochrobactrum group</taxon>
        <taxon>Brucella</taxon>
    </lineage>
</organism>
<reference key="1">
    <citation type="journal article" date="2008" name="PLoS ONE">
        <title>Genome sequence of Brucella abortus vaccine strain S19 compared to virulent strains yields candidate virulence genes.</title>
        <authorList>
            <person name="Crasta O.R."/>
            <person name="Folkerts O."/>
            <person name="Fei Z."/>
            <person name="Mane S.P."/>
            <person name="Evans C."/>
            <person name="Martino-Catt S."/>
            <person name="Bricker B."/>
            <person name="Yu G."/>
            <person name="Du L."/>
            <person name="Sobral B.W."/>
        </authorList>
    </citation>
    <scope>NUCLEOTIDE SEQUENCE [LARGE SCALE GENOMIC DNA]</scope>
    <source>
        <strain>S19</strain>
    </source>
</reference>
<comment type="function">
    <text evidence="1">Involved in the heme biosynthesis. Catalyzes the aerobic oxidative decarboxylation of propionate groups of rings A and B of coproporphyrinogen-III to yield the vinyl groups in protoporphyrinogen-IX.</text>
</comment>
<comment type="catalytic activity">
    <reaction evidence="1">
        <text>coproporphyrinogen III + O2 + 2 H(+) = protoporphyrinogen IX + 2 CO2 + 2 H2O</text>
        <dbReference type="Rhea" id="RHEA:18257"/>
        <dbReference type="ChEBI" id="CHEBI:15377"/>
        <dbReference type="ChEBI" id="CHEBI:15378"/>
        <dbReference type="ChEBI" id="CHEBI:15379"/>
        <dbReference type="ChEBI" id="CHEBI:16526"/>
        <dbReference type="ChEBI" id="CHEBI:57307"/>
        <dbReference type="ChEBI" id="CHEBI:57309"/>
        <dbReference type="EC" id="1.3.3.3"/>
    </reaction>
</comment>
<comment type="cofactor">
    <cofactor evidence="1">
        <name>a divalent metal cation</name>
        <dbReference type="ChEBI" id="CHEBI:60240"/>
    </cofactor>
</comment>
<comment type="pathway">
    <text evidence="1">Porphyrin-containing compound metabolism; protoporphyrin-IX biosynthesis; protoporphyrinogen-IX from coproporphyrinogen-III (O2 route): step 1/1.</text>
</comment>
<comment type="subunit">
    <text evidence="1">Homodimer.</text>
</comment>
<comment type="subcellular location">
    <subcellularLocation>
        <location evidence="1">Cytoplasm</location>
    </subcellularLocation>
</comment>
<comment type="similarity">
    <text evidence="1">Belongs to the aerobic coproporphyrinogen-III oxidase family.</text>
</comment>
<accession>B2S710</accession>
<keyword id="KW-0963">Cytoplasm</keyword>
<keyword id="KW-0350">Heme biosynthesis</keyword>
<keyword id="KW-0479">Metal-binding</keyword>
<keyword id="KW-0560">Oxidoreductase</keyword>
<keyword id="KW-0627">Porphyrin biosynthesis</keyword>
<gene>
    <name evidence="1" type="primary">hemF</name>
    <name type="ordered locus">BAbS19_I14640</name>
</gene>
<name>HEM6_BRUA1</name>
<proteinExistence type="inferred from homology"/>
<evidence type="ECO:0000255" key="1">
    <source>
        <dbReference type="HAMAP-Rule" id="MF_00333"/>
    </source>
</evidence>
<evidence type="ECO:0000256" key="2">
    <source>
        <dbReference type="SAM" id="MobiDB-lite"/>
    </source>
</evidence>
<protein>
    <recommendedName>
        <fullName evidence="1">Oxygen-dependent coproporphyrinogen-III oxidase</fullName>
        <shortName evidence="1">CPO</shortName>
        <shortName evidence="1">Coprogen oxidase</shortName>
        <shortName evidence="1">Coproporphyrinogenase</shortName>
        <ecNumber evidence="1">1.3.3.3</ecNumber>
    </recommendedName>
</protein>
<feature type="chain" id="PRO_1000119786" description="Oxygen-dependent coproporphyrinogen-III oxidase">
    <location>
        <begin position="1"/>
        <end position="303"/>
    </location>
</feature>
<feature type="region of interest" description="Disordered" evidence="2">
    <location>
        <begin position="43"/>
        <end position="62"/>
    </location>
</feature>
<feature type="region of interest" description="Important for dimerization" evidence="1">
    <location>
        <begin position="268"/>
        <end position="303"/>
    </location>
</feature>
<feature type="compositionally biased region" description="Basic and acidic residues" evidence="2">
    <location>
        <begin position="48"/>
        <end position="62"/>
    </location>
</feature>
<feature type="active site" description="Proton donor" evidence="1">
    <location>
        <position position="130"/>
    </location>
</feature>
<feature type="binding site" evidence="1">
    <location>
        <position position="116"/>
    </location>
    <ligand>
        <name>substrate</name>
    </ligand>
</feature>
<feature type="binding site" evidence="1">
    <location>
        <position position="120"/>
    </location>
    <ligand>
        <name>a divalent metal cation</name>
        <dbReference type="ChEBI" id="CHEBI:60240"/>
    </ligand>
</feature>
<feature type="binding site" evidence="1">
    <location>
        <position position="130"/>
    </location>
    <ligand>
        <name>a divalent metal cation</name>
        <dbReference type="ChEBI" id="CHEBI:60240"/>
    </ligand>
</feature>
<feature type="binding site" evidence="1">
    <location>
        <begin position="132"/>
        <end position="134"/>
    </location>
    <ligand>
        <name>substrate</name>
    </ligand>
</feature>
<feature type="binding site" evidence="1">
    <location>
        <position position="168"/>
    </location>
    <ligand>
        <name>a divalent metal cation</name>
        <dbReference type="ChEBI" id="CHEBI:60240"/>
    </ligand>
</feature>
<feature type="binding site" evidence="1">
    <location>
        <position position="199"/>
    </location>
    <ligand>
        <name>a divalent metal cation</name>
        <dbReference type="ChEBI" id="CHEBI:60240"/>
    </ligand>
</feature>
<feature type="binding site" evidence="1">
    <location>
        <begin position="286"/>
        <end position="288"/>
    </location>
    <ligand>
        <name>substrate</name>
    </ligand>
</feature>
<feature type="site" description="Important for dimerization" evidence="1">
    <location>
        <position position="199"/>
    </location>
</feature>